<feature type="chain" id="PRO_0000204205" description="Regulator of G-protein signaling 9">
    <location>
        <begin position="1"/>
        <end position="677"/>
    </location>
</feature>
<feature type="domain" description="DEP" evidence="3">
    <location>
        <begin position="30"/>
        <end position="105"/>
    </location>
</feature>
<feature type="domain" description="G protein gamma">
    <location>
        <begin position="219"/>
        <end position="280"/>
    </location>
</feature>
<feature type="domain" description="RGS" evidence="4">
    <location>
        <begin position="295"/>
        <end position="416"/>
    </location>
</feature>
<feature type="region of interest" description="Disordered" evidence="5">
    <location>
        <begin position="530"/>
        <end position="571"/>
    </location>
</feature>
<feature type="region of interest" description="Disordered" evidence="5">
    <location>
        <begin position="639"/>
        <end position="677"/>
    </location>
</feature>
<feature type="splice variant" id="VSP_005680" description="In isoform RGS9S." evidence="6">
    <location>
        <begin position="467"/>
        <end position="677"/>
    </location>
</feature>
<organism>
    <name type="scientific">Rattus norvegicus</name>
    <name type="common">Rat</name>
    <dbReference type="NCBI Taxonomy" id="10116"/>
    <lineage>
        <taxon>Eukaryota</taxon>
        <taxon>Metazoa</taxon>
        <taxon>Chordata</taxon>
        <taxon>Craniata</taxon>
        <taxon>Vertebrata</taxon>
        <taxon>Euteleostomi</taxon>
        <taxon>Mammalia</taxon>
        <taxon>Eutheria</taxon>
        <taxon>Euarchontoglires</taxon>
        <taxon>Glires</taxon>
        <taxon>Rodentia</taxon>
        <taxon>Myomorpha</taxon>
        <taxon>Muroidea</taxon>
        <taxon>Muridae</taxon>
        <taxon>Murinae</taxon>
        <taxon>Rattus</taxon>
    </lineage>
</organism>
<gene>
    <name type="primary">Rgs9</name>
</gene>
<protein>
    <recommendedName>
        <fullName>Regulator of G-protein signaling 9</fullName>
        <shortName>RGS9</shortName>
    </recommendedName>
</protein>
<proteinExistence type="evidence at transcript level"/>
<accession>P49805</accession>
<sequence length="677" mass="77131">MTIRHQGQQYRPRMAFLQKIEALVKDMQNPETGVRMQNQRVLVTSVPHAMTGGDVLQWIIQRLWISNLEAQNLGNFIVKYGYIYPLQDPKNLVLKPDSSLYRFQTPYFWPTQQWPAEDTDYAIYLAKRNIKKKGILEEYEKENYDFLNKKINYKWDFVIMQAKEQYRTGKERNKADRYALDCQEKAYWLVHRSPPGMNNVLDYGLDRVTNPNEVKKQTVTAVRKEIMYYQQALMRSTVKSSVSLGGIVKYSEQFSSNDAIMSGCLPSNPWITDDTQFWDLNAKLVEVPTKMRVERWAFNFSELIRDPKGRQSFQYFLKKEFSGENLGFWEACEDLKYGDQSKVKEKAEEIYKLFLAPGARRWINIDGKTMDITVKGLRHPHRYVLDAAQTHIYMLMKKDSYARYLKSPIYKEMLAKAIEPQETTKRSSTLPFMRRHLRSSPSPVILRQLEEEERAREAANTVDITQPGQHLAPSPHLAVYTGTCVPPSPSSPFSPSCRSPRKPFPSPSRFIRRPSIAICPSPIRVALEGSSGLEGKGEASWSGANPGPPVTESIETSVDRSRPHSQPRAPLKARAALSLGRFLRRGCLASPVFARLSPKCPSVSHGKVQPLGDMGQQLPRLKPKKVANFFQIKMEMPTDSGPCLMDSDDPGAGESGDQTTEKEVICPWESLAEGKAG</sequence>
<reference key="1">
    <citation type="journal article" date="1998" name="Mol. Pharmacol.">
        <title>Molecular characterization of human and rat RGS9L, a novel splice variant enriched in dopamine target regions, and chromosomal localization of the RGS9 gene.</title>
        <authorList>
            <person name="Granneman J.G."/>
            <person name="Zhai Y."/>
            <person name="Zhu Z."/>
            <person name="Bannon M.J."/>
            <person name="Burchett S.A."/>
            <person name="Schmidt C.J."/>
            <person name="Andrade R."/>
            <person name="Cooper J."/>
        </authorList>
    </citation>
    <scope>NUCLEOTIDE SEQUENCE [MRNA]</scope>
    <scope>ALTERNATIVE SPLICING</scope>
    <source>
        <strain>Sprague-Dawley</strain>
        <tissue>Hypothalamus</tissue>
    </source>
</reference>
<reference key="2">
    <citation type="submission" date="1998-10" db="EMBL/GenBank/DDBJ databases">
        <title>A long form of rat regulator of G-protein signaling 9 (RGS9).</title>
        <authorList>
            <person name="Zhou J."/>
            <person name="Moroi K."/>
            <person name="Homma S."/>
            <person name="Usui H."/>
            <person name="Nishiyama M."/>
            <person name="Kimura S."/>
        </authorList>
    </citation>
    <scope>NUCLEOTIDE SEQUENCE [MRNA] (ISOFORM RGS9L)</scope>
    <source>
        <tissue>Brain</tissue>
    </source>
</reference>
<reference key="3">
    <citation type="journal article" date="1998" name="J. Neurosci. Res.">
        <title>RGS9: a regulator of G-protein signalling with specific expression in rat and mouse striatum.</title>
        <authorList>
            <person name="Thomas E.A."/>
            <person name="Danielson P.E."/>
            <person name="Sutcliffe J.G."/>
        </authorList>
    </citation>
    <scope>NUCLEOTIDE SEQUENCE [MRNA] OF 234-677 (ISOFORM RGS9L)</scope>
    <source>
        <strain>Sprague-Dawley</strain>
        <tissue>Cerebellum</tissue>
        <tissue>Corpus striatum</tissue>
        <tissue>Hippocampus</tissue>
    </source>
</reference>
<reference key="4">
    <citation type="journal article" date="1996" name="Cell">
        <title>EGL-10 regulates G protein signaling in the C. elegans nervous system and shares a conserved domain with many mammalian proteins.</title>
        <authorList>
            <person name="Koelle M.R."/>
            <person name="Horvitz H.R."/>
        </authorList>
    </citation>
    <scope>NUCLEOTIDE SEQUENCE [MRNA] OF 330-395</scope>
    <source>
        <tissue>Brain</tissue>
    </source>
</reference>
<name>RGS9_RAT</name>
<dbReference type="EMBL" id="AF071475">
    <property type="protein sequence ID" value="AAC64039.1"/>
    <property type="molecule type" value="mRNA"/>
</dbReference>
<dbReference type="EMBL" id="AB019145">
    <property type="protein sequence ID" value="BAA34051.1"/>
    <property type="molecule type" value="mRNA"/>
</dbReference>
<dbReference type="EMBL" id="AF038006">
    <property type="protein sequence ID" value="AAC01959.1"/>
    <property type="molecule type" value="mRNA"/>
</dbReference>
<dbReference type="EMBL" id="U32433">
    <property type="protein sequence ID" value="AAC52370.1"/>
    <property type="molecule type" value="mRNA"/>
</dbReference>
<dbReference type="RefSeq" id="NP_062097.1">
    <molecule id="P49805-1"/>
    <property type="nucleotide sequence ID" value="NM_019224.2"/>
</dbReference>
<dbReference type="SMR" id="P49805"/>
<dbReference type="FunCoup" id="P49805">
    <property type="interactions" value="766"/>
</dbReference>
<dbReference type="STRING" id="10116.ENSRNOP00000005076"/>
<dbReference type="CarbonylDB" id="P49805"/>
<dbReference type="PhosphoSitePlus" id="P49805"/>
<dbReference type="PaxDb" id="10116-ENSRNOP00000005076"/>
<dbReference type="Ensembl" id="ENSRNOT00000005076.7">
    <molecule id="P49805-1"/>
    <property type="protein sequence ID" value="ENSRNOP00000005076.6"/>
    <property type="gene ID" value="ENSRNOG00000003800.7"/>
</dbReference>
<dbReference type="GeneID" id="29481"/>
<dbReference type="KEGG" id="rno:29481"/>
<dbReference type="AGR" id="RGD:3572"/>
<dbReference type="CTD" id="8787"/>
<dbReference type="RGD" id="3572">
    <property type="gene designation" value="Rgs9"/>
</dbReference>
<dbReference type="eggNOG" id="KOG3589">
    <property type="taxonomic scope" value="Eukaryota"/>
</dbReference>
<dbReference type="GeneTree" id="ENSGT00940000156505"/>
<dbReference type="HOGENOM" id="CLU_025092_5_0_1"/>
<dbReference type="InParanoid" id="P49805"/>
<dbReference type="OrthoDB" id="196547at2759"/>
<dbReference type="PhylomeDB" id="P49805"/>
<dbReference type="Reactome" id="R-RNO-2514859">
    <property type="pathway name" value="Inactivation, recovery and regulation of the phototransduction cascade"/>
</dbReference>
<dbReference type="Reactome" id="R-RNO-418594">
    <property type="pathway name" value="G alpha (i) signalling events"/>
</dbReference>
<dbReference type="Reactome" id="R-RNO-6814122">
    <property type="pathway name" value="Cooperation of PDCL (PhLP1) and TRiC/CCT in G-protein beta folding"/>
</dbReference>
<dbReference type="PRO" id="PR:P49805"/>
<dbReference type="Proteomes" id="UP000002494">
    <property type="component" value="Chromosome 10"/>
</dbReference>
<dbReference type="Bgee" id="ENSRNOG00000003800">
    <property type="expression patterns" value="Expressed in frontal cortex and 10 other cell types or tissues"/>
</dbReference>
<dbReference type="GO" id="GO:0005737">
    <property type="term" value="C:cytoplasm"/>
    <property type="evidence" value="ECO:0000318"/>
    <property type="project" value="GO_Central"/>
</dbReference>
<dbReference type="GO" id="GO:0098978">
    <property type="term" value="C:glutamatergic synapse"/>
    <property type="evidence" value="ECO:0000266"/>
    <property type="project" value="RGD"/>
</dbReference>
<dbReference type="GO" id="GO:0043005">
    <property type="term" value="C:neuron projection"/>
    <property type="evidence" value="ECO:0000318"/>
    <property type="project" value="GO_Central"/>
</dbReference>
<dbReference type="GO" id="GO:0005886">
    <property type="term" value="C:plasma membrane"/>
    <property type="evidence" value="ECO:0000318"/>
    <property type="project" value="GO_Central"/>
</dbReference>
<dbReference type="GO" id="GO:0098839">
    <property type="term" value="C:postsynaptic density membrane"/>
    <property type="evidence" value="ECO:0000266"/>
    <property type="project" value="RGD"/>
</dbReference>
<dbReference type="GO" id="GO:0042734">
    <property type="term" value="C:presynaptic membrane"/>
    <property type="evidence" value="ECO:0000266"/>
    <property type="project" value="RGD"/>
</dbReference>
<dbReference type="GO" id="GO:0005096">
    <property type="term" value="F:GTPase activator activity"/>
    <property type="evidence" value="ECO:0000314"/>
    <property type="project" value="RGD"/>
</dbReference>
<dbReference type="GO" id="GO:1990603">
    <property type="term" value="P:dark adaptation"/>
    <property type="evidence" value="ECO:0000266"/>
    <property type="project" value="RGD"/>
</dbReference>
<dbReference type="GO" id="GO:0007212">
    <property type="term" value="P:G protein-coupled dopamine receptor signaling pathway"/>
    <property type="evidence" value="ECO:0000315"/>
    <property type="project" value="RGD"/>
</dbReference>
<dbReference type="GO" id="GO:0035556">
    <property type="term" value="P:intracellular signal transduction"/>
    <property type="evidence" value="ECO:0007669"/>
    <property type="project" value="InterPro"/>
</dbReference>
<dbReference type="GO" id="GO:0036367">
    <property type="term" value="P:light adaption"/>
    <property type="evidence" value="ECO:0000266"/>
    <property type="project" value="RGD"/>
</dbReference>
<dbReference type="GO" id="GO:0009968">
    <property type="term" value="P:negative regulation of signal transduction"/>
    <property type="evidence" value="ECO:0007669"/>
    <property type="project" value="UniProtKB-KW"/>
</dbReference>
<dbReference type="GO" id="GO:0007399">
    <property type="term" value="P:nervous system development"/>
    <property type="evidence" value="ECO:0000270"/>
    <property type="project" value="RGD"/>
</dbReference>
<dbReference type="GO" id="GO:1905912">
    <property type="term" value="P:regulation of calcium ion export across plasma membrane"/>
    <property type="evidence" value="ECO:0000314"/>
    <property type="project" value="RGD"/>
</dbReference>
<dbReference type="GO" id="GO:0008277">
    <property type="term" value="P:regulation of G protein-coupled receptor signaling pathway"/>
    <property type="evidence" value="ECO:0000314"/>
    <property type="project" value="RGD"/>
</dbReference>
<dbReference type="GO" id="GO:0001975">
    <property type="term" value="P:response to amphetamine"/>
    <property type="evidence" value="ECO:0000270"/>
    <property type="project" value="RGD"/>
</dbReference>
<dbReference type="GO" id="GO:0032355">
    <property type="term" value="P:response to estradiol"/>
    <property type="evidence" value="ECO:0000270"/>
    <property type="project" value="RGD"/>
</dbReference>
<dbReference type="GO" id="GO:0007601">
    <property type="term" value="P:visual perception"/>
    <property type="evidence" value="ECO:0007669"/>
    <property type="project" value="UniProtKB-KW"/>
</dbReference>
<dbReference type="CDD" id="cd04450">
    <property type="entry name" value="DEP_RGS7-like"/>
    <property type="match status" value="1"/>
</dbReference>
<dbReference type="CDD" id="cd00068">
    <property type="entry name" value="GGL"/>
    <property type="match status" value="1"/>
</dbReference>
<dbReference type="CDD" id="cd08739">
    <property type="entry name" value="RGS_RGS9"/>
    <property type="match status" value="1"/>
</dbReference>
<dbReference type="FunFam" id="1.10.1240.60:FF:000001">
    <property type="entry name" value="Regulator of G-protein signaling 6"/>
    <property type="match status" value="1"/>
</dbReference>
<dbReference type="FunFam" id="1.10.167.10:FF:000002">
    <property type="entry name" value="Regulator of G-protein signaling 6 isoform 9"/>
    <property type="match status" value="1"/>
</dbReference>
<dbReference type="FunFam" id="1.10.10.10:FF:000329">
    <property type="entry name" value="regulator of G-protein signaling 9 isoform X2"/>
    <property type="match status" value="1"/>
</dbReference>
<dbReference type="Gene3D" id="1.10.1240.60">
    <property type="match status" value="1"/>
</dbReference>
<dbReference type="Gene3D" id="1.10.167.10">
    <property type="entry name" value="Regulator of G-protein Signalling 4, domain 2"/>
    <property type="match status" value="1"/>
</dbReference>
<dbReference type="Gene3D" id="4.10.260.10">
    <property type="entry name" value="Transducin (heterotrimeric G protein), gamma chain"/>
    <property type="match status" value="1"/>
</dbReference>
<dbReference type="Gene3D" id="1.10.10.10">
    <property type="entry name" value="Winged helix-like DNA-binding domain superfamily/Winged helix DNA-binding domain"/>
    <property type="match status" value="1"/>
</dbReference>
<dbReference type="InterPro" id="IPR000591">
    <property type="entry name" value="DEP_dom"/>
</dbReference>
<dbReference type="InterPro" id="IPR015898">
    <property type="entry name" value="G-protein_gamma-like_dom"/>
</dbReference>
<dbReference type="InterPro" id="IPR036284">
    <property type="entry name" value="GGL_sf"/>
</dbReference>
<dbReference type="InterPro" id="IPR016137">
    <property type="entry name" value="RGS"/>
</dbReference>
<dbReference type="InterPro" id="IPR047016">
    <property type="entry name" value="RGS6/7/9/11"/>
</dbReference>
<dbReference type="InterPro" id="IPR047017">
    <property type="entry name" value="RGS6/7/9/11_DHEX_sf"/>
</dbReference>
<dbReference type="InterPro" id="IPR047077">
    <property type="entry name" value="RGS9_RGS"/>
</dbReference>
<dbReference type="InterPro" id="IPR040759">
    <property type="entry name" value="RGS_DHEX"/>
</dbReference>
<dbReference type="InterPro" id="IPR036305">
    <property type="entry name" value="RGS_sf"/>
</dbReference>
<dbReference type="InterPro" id="IPR044926">
    <property type="entry name" value="RGS_subdomain_2"/>
</dbReference>
<dbReference type="InterPro" id="IPR036388">
    <property type="entry name" value="WH-like_DNA-bd_sf"/>
</dbReference>
<dbReference type="InterPro" id="IPR036390">
    <property type="entry name" value="WH_DNA-bd_sf"/>
</dbReference>
<dbReference type="PANTHER" id="PTHR45746">
    <property type="entry name" value="LP21163P"/>
    <property type="match status" value="1"/>
</dbReference>
<dbReference type="PANTHER" id="PTHR45746:SF1">
    <property type="entry name" value="REGULATOR OF G-PROTEIN SIGNALING 9"/>
    <property type="match status" value="1"/>
</dbReference>
<dbReference type="Pfam" id="PF00610">
    <property type="entry name" value="DEP"/>
    <property type="match status" value="1"/>
</dbReference>
<dbReference type="Pfam" id="PF00631">
    <property type="entry name" value="G-gamma"/>
    <property type="match status" value="1"/>
</dbReference>
<dbReference type="Pfam" id="PF00615">
    <property type="entry name" value="RGS"/>
    <property type="match status" value="1"/>
</dbReference>
<dbReference type="Pfam" id="PF18148">
    <property type="entry name" value="RGS_DHEX"/>
    <property type="match status" value="1"/>
</dbReference>
<dbReference type="PRINTS" id="PR01301">
    <property type="entry name" value="RGSPROTEIN"/>
</dbReference>
<dbReference type="SMART" id="SM00049">
    <property type="entry name" value="DEP"/>
    <property type="match status" value="1"/>
</dbReference>
<dbReference type="SMART" id="SM01224">
    <property type="entry name" value="G_gamma"/>
    <property type="match status" value="1"/>
</dbReference>
<dbReference type="SMART" id="SM00224">
    <property type="entry name" value="GGL"/>
    <property type="match status" value="1"/>
</dbReference>
<dbReference type="SMART" id="SM00315">
    <property type="entry name" value="RGS"/>
    <property type="match status" value="1"/>
</dbReference>
<dbReference type="SUPFAM" id="SSF48097">
    <property type="entry name" value="Regulator of G-protein signaling, RGS"/>
    <property type="match status" value="1"/>
</dbReference>
<dbReference type="SUPFAM" id="SSF48670">
    <property type="entry name" value="Transducin (heterotrimeric G protein), gamma chain"/>
    <property type="match status" value="1"/>
</dbReference>
<dbReference type="SUPFAM" id="SSF46785">
    <property type="entry name" value="Winged helix' DNA-binding domain"/>
    <property type="match status" value="1"/>
</dbReference>
<dbReference type="PROSITE" id="PS50186">
    <property type="entry name" value="DEP"/>
    <property type="match status" value="1"/>
</dbReference>
<dbReference type="PROSITE" id="PS50132">
    <property type="entry name" value="RGS"/>
    <property type="match status" value="1"/>
</dbReference>
<evidence type="ECO:0000250" key="1"/>
<evidence type="ECO:0000250" key="2">
    <source>
        <dbReference type="UniProtKB" id="O46469"/>
    </source>
</evidence>
<evidence type="ECO:0000255" key="3">
    <source>
        <dbReference type="PROSITE-ProRule" id="PRU00066"/>
    </source>
</evidence>
<evidence type="ECO:0000255" key="4">
    <source>
        <dbReference type="PROSITE-ProRule" id="PRU00171"/>
    </source>
</evidence>
<evidence type="ECO:0000256" key="5">
    <source>
        <dbReference type="SAM" id="MobiDB-lite"/>
    </source>
</evidence>
<evidence type="ECO:0000305" key="6"/>
<comment type="function">
    <text evidence="1">Inhibits signal transduction by increasing the GTPase activity of G protein alpha subunits thereby driving them into their inactive GDP-bound form. Binds to GNAT1. Involved in phototransduction; key element in the recovery phase of visual transduction (By similarity).</text>
</comment>
<comment type="subunit">
    <text evidence="2">Heterodimer with GNB5. Interacts with RGS7BP, leading to regulate the subcellular location of the heterodimer formed with GNB5. Component of the RGS9-1-Gbeta5 complex composed of RGS9 (RGS9-1), Gbeta5 (GNB5) and RGS9BP. Interacts with PDE6G and GNAT1.</text>
</comment>
<comment type="subcellular location">
    <subcellularLocation>
        <location>Membrane</location>
        <topology>Peripheral membrane protein</topology>
    </subcellularLocation>
    <text evidence="1">Targeted to the membrane via its interaction with RGS9BP.</text>
</comment>
<comment type="alternative products">
    <event type="alternative splicing"/>
    <isoform>
        <id>P49805-1</id>
        <name>RGS9L</name>
        <sequence type="displayed"/>
    </isoform>
    <isoform>
        <id>P49805-2</id>
        <name>RGS9S</name>
        <sequence type="described" ref="VSP_005680"/>
    </isoform>
</comment>
<comment type="tissue specificity">
    <text>Expressed in the central nervous system. Isoform RGS9L is found in striatum, hypothalamus and nucleus accumbens while isoform RGS9S is expressed in retina and pineal gland.</text>
</comment>
<keyword id="KW-0025">Alternative splicing</keyword>
<keyword id="KW-0472">Membrane</keyword>
<keyword id="KW-1185">Reference proteome</keyword>
<keyword id="KW-0716">Sensory transduction</keyword>
<keyword id="KW-0734">Signal transduction inhibitor</keyword>
<keyword id="KW-0844">Vision</keyword>